<protein>
    <recommendedName>
        <fullName evidence="1">Large ribosomal subunit protein bL32</fullName>
    </recommendedName>
    <alternativeName>
        <fullName evidence="3">50S ribosomal protein L32</fullName>
    </alternativeName>
</protein>
<evidence type="ECO:0000255" key="1">
    <source>
        <dbReference type="HAMAP-Rule" id="MF_00340"/>
    </source>
</evidence>
<evidence type="ECO:0000256" key="2">
    <source>
        <dbReference type="SAM" id="MobiDB-lite"/>
    </source>
</evidence>
<evidence type="ECO:0000305" key="3"/>
<name>RL32_ERWT9</name>
<comment type="similarity">
    <text evidence="1">Belongs to the bacterial ribosomal protein bL32 family.</text>
</comment>
<feature type="chain" id="PRO_1000120124" description="Large ribosomal subunit protein bL32">
    <location>
        <begin position="1"/>
        <end position="56"/>
    </location>
</feature>
<feature type="region of interest" description="Disordered" evidence="2">
    <location>
        <begin position="1"/>
        <end position="26"/>
    </location>
</feature>
<keyword id="KW-1185">Reference proteome</keyword>
<keyword id="KW-0687">Ribonucleoprotein</keyword>
<keyword id="KW-0689">Ribosomal protein</keyword>
<accession>B2VDK9</accession>
<dbReference type="EMBL" id="CU468135">
    <property type="protein sequence ID" value="CAO97072.1"/>
    <property type="molecule type" value="Genomic_DNA"/>
</dbReference>
<dbReference type="RefSeq" id="WP_004157101.1">
    <property type="nucleotide sequence ID" value="NC_010694.1"/>
</dbReference>
<dbReference type="SMR" id="B2VDK9"/>
<dbReference type="STRING" id="465817.ETA_20260"/>
<dbReference type="GeneID" id="97605758"/>
<dbReference type="KEGG" id="eta:ETA_20260"/>
<dbReference type="eggNOG" id="COG0333">
    <property type="taxonomic scope" value="Bacteria"/>
</dbReference>
<dbReference type="HOGENOM" id="CLU_129084_2_1_6"/>
<dbReference type="OrthoDB" id="9801927at2"/>
<dbReference type="Proteomes" id="UP000001726">
    <property type="component" value="Chromosome"/>
</dbReference>
<dbReference type="GO" id="GO:0015934">
    <property type="term" value="C:large ribosomal subunit"/>
    <property type="evidence" value="ECO:0007669"/>
    <property type="project" value="InterPro"/>
</dbReference>
<dbReference type="GO" id="GO:0003735">
    <property type="term" value="F:structural constituent of ribosome"/>
    <property type="evidence" value="ECO:0007669"/>
    <property type="project" value="InterPro"/>
</dbReference>
<dbReference type="GO" id="GO:0006412">
    <property type="term" value="P:translation"/>
    <property type="evidence" value="ECO:0007669"/>
    <property type="project" value="UniProtKB-UniRule"/>
</dbReference>
<dbReference type="HAMAP" id="MF_00340">
    <property type="entry name" value="Ribosomal_bL32"/>
    <property type="match status" value="1"/>
</dbReference>
<dbReference type="InterPro" id="IPR002677">
    <property type="entry name" value="Ribosomal_bL32"/>
</dbReference>
<dbReference type="InterPro" id="IPR044957">
    <property type="entry name" value="Ribosomal_bL32_bact"/>
</dbReference>
<dbReference type="InterPro" id="IPR011332">
    <property type="entry name" value="Ribosomal_zn-bd"/>
</dbReference>
<dbReference type="NCBIfam" id="TIGR01031">
    <property type="entry name" value="rpmF_bact"/>
    <property type="match status" value="1"/>
</dbReference>
<dbReference type="PANTHER" id="PTHR35534">
    <property type="entry name" value="50S RIBOSOMAL PROTEIN L32"/>
    <property type="match status" value="1"/>
</dbReference>
<dbReference type="PANTHER" id="PTHR35534:SF1">
    <property type="entry name" value="LARGE RIBOSOMAL SUBUNIT PROTEIN BL32"/>
    <property type="match status" value="1"/>
</dbReference>
<dbReference type="Pfam" id="PF01783">
    <property type="entry name" value="Ribosomal_L32p"/>
    <property type="match status" value="1"/>
</dbReference>
<dbReference type="SUPFAM" id="SSF57829">
    <property type="entry name" value="Zn-binding ribosomal proteins"/>
    <property type="match status" value="1"/>
</dbReference>
<gene>
    <name evidence="1" type="primary">rpmF</name>
    <name type="ordered locus">ETA_20260</name>
</gene>
<reference key="1">
    <citation type="journal article" date="2008" name="Environ. Microbiol.">
        <title>The genome of Erwinia tasmaniensis strain Et1/99, a non-pathogenic bacterium in the genus Erwinia.</title>
        <authorList>
            <person name="Kube M."/>
            <person name="Migdoll A.M."/>
            <person name="Mueller I."/>
            <person name="Kuhl H."/>
            <person name="Beck A."/>
            <person name="Reinhardt R."/>
            <person name="Geider K."/>
        </authorList>
    </citation>
    <scope>NUCLEOTIDE SEQUENCE [LARGE SCALE GENOMIC DNA]</scope>
    <source>
        <strain>DSM 17950 / CFBP 7177 / CIP 109463 / NCPPB 4357 / Et1/99</strain>
    </source>
</reference>
<organism>
    <name type="scientific">Erwinia tasmaniensis (strain DSM 17950 / CFBP 7177 / CIP 109463 / NCPPB 4357 / Et1/99)</name>
    <dbReference type="NCBI Taxonomy" id="465817"/>
    <lineage>
        <taxon>Bacteria</taxon>
        <taxon>Pseudomonadati</taxon>
        <taxon>Pseudomonadota</taxon>
        <taxon>Gammaproteobacteria</taxon>
        <taxon>Enterobacterales</taxon>
        <taxon>Erwiniaceae</taxon>
        <taxon>Erwinia</taxon>
    </lineage>
</organism>
<proteinExistence type="inferred from homology"/>
<sequence>MAVQQNKPTRSKRGMRRSHDSLTTAALSVDKVSGETHLRHHITADGYYRGRKVIVK</sequence>